<organism>
    <name type="scientific">Subterranean clover stunt virus (strain F)</name>
    <name type="common">SCSV</name>
    <dbReference type="NCBI Taxonomy" id="291607"/>
    <lineage>
        <taxon>Viruses</taxon>
        <taxon>Monodnaviria</taxon>
        <taxon>Shotokuvirae</taxon>
        <taxon>Cressdnaviricota</taxon>
        <taxon>Arfiviricetes</taxon>
        <taxon>Mulpavirales</taxon>
        <taxon>Nanoviridae</taxon>
        <taxon>Nanovirus</taxon>
        <taxon>Subterranean clover stunt virus</taxon>
    </lineage>
</organism>
<comment type="function">
    <text evidence="1">May transport viral genome to neighboring plant cells directly through plasmosdesmata, without any budding. The movement protein allows efficient cell to cell propagation, by bypassing the host cell wall barrier (By similarity).</text>
</comment>
<comment type="subcellular location">
    <subcellularLocation>
        <location evidence="4">Host cell membrane</location>
        <topology evidence="4">Single-pass membrane protein</topology>
    </subcellularLocation>
    <text evidence="1">The hydrophobic region is responsible for the localization of the protein to the cell periphery.</text>
</comment>
<comment type="similarity">
    <text evidence="4">Belongs to the nanovirus movement protein family.</text>
</comment>
<sequence length="112" mass="12699">MDSGDGYNTYSYEEGAGDAKKEVLYKIGIIMLCIVGIVVLWVLIILCCAVPRYAKSTMDAWLSSSSIMKRKMASRITGTPFEETGPHRERRWAERRTEATNQNNNDNVNRFS</sequence>
<evidence type="ECO:0000250" key="1"/>
<evidence type="ECO:0000255" key="2"/>
<evidence type="ECO:0000256" key="3">
    <source>
        <dbReference type="SAM" id="MobiDB-lite"/>
    </source>
</evidence>
<evidence type="ECO:0000305" key="4"/>
<proteinExistence type="inferred from homology"/>
<accession>Q87008</accession>
<protein>
    <recommendedName>
        <fullName>Putative movement protein</fullName>
        <shortName>MP</shortName>
    </recommendedName>
</protein>
<reference key="1">
    <citation type="journal article" date="1995" name="Virology">
        <title>Sequence of subterranean clover stunt virus DNA: affinities with the geminiviruses.</title>
        <authorList>
            <person name="Boevink P.C."/>
            <person name="Chu P.W.G."/>
            <person name="Keese P.K."/>
        </authorList>
    </citation>
    <scope>NUCLEOTIDE SEQUENCE [GENOMIC DNA]</scope>
</reference>
<feature type="chain" id="PRO_0000378540" description="Putative movement protein">
    <location>
        <begin position="1"/>
        <end position="112"/>
    </location>
</feature>
<feature type="transmembrane region" description="Helical" evidence="2">
    <location>
        <begin position="27"/>
        <end position="47"/>
    </location>
</feature>
<feature type="region of interest" description="Disordered" evidence="3">
    <location>
        <begin position="77"/>
        <end position="112"/>
    </location>
</feature>
<feature type="compositionally biased region" description="Basic and acidic residues" evidence="3">
    <location>
        <begin position="84"/>
        <end position="98"/>
    </location>
</feature>
<feature type="compositionally biased region" description="Polar residues" evidence="3">
    <location>
        <begin position="101"/>
        <end position="112"/>
    </location>
</feature>
<dbReference type="EMBL" id="U16730">
    <property type="protein sequence ID" value="AAA68017.1"/>
    <property type="molecule type" value="Genomic_DNA"/>
</dbReference>
<dbReference type="Proteomes" id="UP001515400">
    <property type="component" value="Genome"/>
</dbReference>
<dbReference type="GO" id="GO:0020002">
    <property type="term" value="C:host cell plasma membrane"/>
    <property type="evidence" value="ECO:0007669"/>
    <property type="project" value="UniProtKB-SubCell"/>
</dbReference>
<dbReference type="GO" id="GO:0016020">
    <property type="term" value="C:membrane"/>
    <property type="evidence" value="ECO:0007669"/>
    <property type="project" value="UniProtKB-KW"/>
</dbReference>
<dbReference type="GO" id="GO:0046740">
    <property type="term" value="P:transport of virus in host, cell to cell"/>
    <property type="evidence" value="ECO:0007669"/>
    <property type="project" value="UniProtKB-KW"/>
</dbReference>
<gene>
    <name type="primary">DNA-M</name>
    <name type="synonym">C1</name>
</gene>
<organismHost>
    <name type="scientific">Trifolium subterraneum</name>
    <name type="common">Subterranean clover</name>
    <dbReference type="NCBI Taxonomy" id="3900"/>
</organismHost>
<keyword id="KW-1032">Host cell membrane</keyword>
<keyword id="KW-1043">Host membrane</keyword>
<keyword id="KW-0472">Membrane</keyword>
<keyword id="KW-1185">Reference proteome</keyword>
<keyword id="KW-0812">Transmembrane</keyword>
<keyword id="KW-1133">Transmembrane helix</keyword>
<keyword id="KW-0813">Transport</keyword>
<keyword id="KW-0916">Viral movement protein</keyword>
<name>MVP_SCSVF</name>